<dbReference type="EC" id="2.5.1.7" evidence="1"/>
<dbReference type="EMBL" id="AM167904">
    <property type="protein sequence ID" value="CAJ50922.1"/>
    <property type="molecule type" value="Genomic_DNA"/>
</dbReference>
<dbReference type="RefSeq" id="WP_012418949.1">
    <property type="nucleotide sequence ID" value="NC_010645.1"/>
</dbReference>
<dbReference type="SMR" id="Q2KTT8"/>
<dbReference type="STRING" id="360910.BAV3312"/>
<dbReference type="KEGG" id="bav:BAV3312"/>
<dbReference type="eggNOG" id="COG0766">
    <property type="taxonomic scope" value="Bacteria"/>
</dbReference>
<dbReference type="HOGENOM" id="CLU_027387_0_0_4"/>
<dbReference type="OrthoDB" id="9803760at2"/>
<dbReference type="UniPathway" id="UPA00219"/>
<dbReference type="Proteomes" id="UP000001977">
    <property type="component" value="Chromosome"/>
</dbReference>
<dbReference type="GO" id="GO:0005737">
    <property type="term" value="C:cytoplasm"/>
    <property type="evidence" value="ECO:0007669"/>
    <property type="project" value="UniProtKB-SubCell"/>
</dbReference>
<dbReference type="GO" id="GO:0008760">
    <property type="term" value="F:UDP-N-acetylglucosamine 1-carboxyvinyltransferase activity"/>
    <property type="evidence" value="ECO:0007669"/>
    <property type="project" value="UniProtKB-UniRule"/>
</dbReference>
<dbReference type="GO" id="GO:0051301">
    <property type="term" value="P:cell division"/>
    <property type="evidence" value="ECO:0007669"/>
    <property type="project" value="UniProtKB-KW"/>
</dbReference>
<dbReference type="GO" id="GO:0071555">
    <property type="term" value="P:cell wall organization"/>
    <property type="evidence" value="ECO:0007669"/>
    <property type="project" value="UniProtKB-KW"/>
</dbReference>
<dbReference type="GO" id="GO:0009252">
    <property type="term" value="P:peptidoglycan biosynthetic process"/>
    <property type="evidence" value="ECO:0007669"/>
    <property type="project" value="UniProtKB-UniRule"/>
</dbReference>
<dbReference type="GO" id="GO:0008360">
    <property type="term" value="P:regulation of cell shape"/>
    <property type="evidence" value="ECO:0007669"/>
    <property type="project" value="UniProtKB-KW"/>
</dbReference>
<dbReference type="GO" id="GO:0019277">
    <property type="term" value="P:UDP-N-acetylgalactosamine biosynthetic process"/>
    <property type="evidence" value="ECO:0007669"/>
    <property type="project" value="InterPro"/>
</dbReference>
<dbReference type="CDD" id="cd01555">
    <property type="entry name" value="UdpNAET"/>
    <property type="match status" value="1"/>
</dbReference>
<dbReference type="FunFam" id="3.65.10.10:FF:000001">
    <property type="entry name" value="UDP-N-acetylglucosamine 1-carboxyvinyltransferase"/>
    <property type="match status" value="1"/>
</dbReference>
<dbReference type="Gene3D" id="3.65.10.10">
    <property type="entry name" value="Enolpyruvate transferase domain"/>
    <property type="match status" value="2"/>
</dbReference>
<dbReference type="HAMAP" id="MF_00111">
    <property type="entry name" value="MurA"/>
    <property type="match status" value="1"/>
</dbReference>
<dbReference type="InterPro" id="IPR001986">
    <property type="entry name" value="Enolpyruvate_Tfrase_dom"/>
</dbReference>
<dbReference type="InterPro" id="IPR036968">
    <property type="entry name" value="Enolpyruvate_Tfrase_sf"/>
</dbReference>
<dbReference type="InterPro" id="IPR050068">
    <property type="entry name" value="MurA_subfamily"/>
</dbReference>
<dbReference type="InterPro" id="IPR013792">
    <property type="entry name" value="RNA3'P_cycl/enolpyr_Trfase_a/b"/>
</dbReference>
<dbReference type="InterPro" id="IPR005750">
    <property type="entry name" value="UDP_GlcNAc_COvinyl_MurA"/>
</dbReference>
<dbReference type="NCBIfam" id="TIGR01072">
    <property type="entry name" value="murA"/>
    <property type="match status" value="1"/>
</dbReference>
<dbReference type="NCBIfam" id="NF006873">
    <property type="entry name" value="PRK09369.1"/>
    <property type="match status" value="1"/>
</dbReference>
<dbReference type="PANTHER" id="PTHR43783">
    <property type="entry name" value="UDP-N-ACETYLGLUCOSAMINE 1-CARBOXYVINYLTRANSFERASE"/>
    <property type="match status" value="1"/>
</dbReference>
<dbReference type="PANTHER" id="PTHR43783:SF1">
    <property type="entry name" value="UDP-N-ACETYLGLUCOSAMINE 1-CARBOXYVINYLTRANSFERASE"/>
    <property type="match status" value="1"/>
</dbReference>
<dbReference type="Pfam" id="PF00275">
    <property type="entry name" value="EPSP_synthase"/>
    <property type="match status" value="1"/>
</dbReference>
<dbReference type="SUPFAM" id="SSF55205">
    <property type="entry name" value="EPT/RTPC-like"/>
    <property type="match status" value="1"/>
</dbReference>
<gene>
    <name evidence="1" type="primary">murA</name>
    <name type="ordered locus">BAV3312</name>
</gene>
<organism>
    <name type="scientific">Bordetella avium (strain 197N)</name>
    <dbReference type="NCBI Taxonomy" id="360910"/>
    <lineage>
        <taxon>Bacteria</taxon>
        <taxon>Pseudomonadati</taxon>
        <taxon>Pseudomonadota</taxon>
        <taxon>Betaproteobacteria</taxon>
        <taxon>Burkholderiales</taxon>
        <taxon>Alcaligenaceae</taxon>
        <taxon>Bordetella</taxon>
    </lineage>
</organism>
<sequence>MDKLRITGGARLHGEVVISGAKNSALPILCASLLTADPVRLSNVPQLNDTRTMLRLLGQMGVKAESAQTSVNLQADQVHSLEAPYELVKTMRASILVLGPLLARFGEARVSLPGGCTIGQRPVDQHIKGLEALGAQITMEHGFVVARAKRLKGASVRTDMVTVTGTENLLMAATLAEGQTILENAAREPEVIDLAELLIKMGARIQGHGTDRIVIDGVERLHGADHTVISDRIEAGTFLCAVGATGGDITLRNTDAAIMGATLDKLTEAGLHIESGPGWIRGVMNGRPKPVGIRTHEYPGFATDMQAQLMALNTIADGTAIVVENIFENRFMHVQELCRLGADIDIDGHTAVVRGVARLSGATVMATDLRASASLVIAGLAAEGDTLIDRIYHLDRGYDRMEIKLRNLGARIERVTGKEDE</sequence>
<accession>Q2KTT8</accession>
<feature type="chain" id="PRO_1000023021" description="UDP-N-acetylglucosamine 1-carboxyvinyltransferase">
    <location>
        <begin position="1"/>
        <end position="421"/>
    </location>
</feature>
<feature type="active site" description="Proton donor" evidence="1">
    <location>
        <position position="116"/>
    </location>
</feature>
<feature type="binding site" evidence="1">
    <location>
        <begin position="22"/>
        <end position="23"/>
    </location>
    <ligand>
        <name>phosphoenolpyruvate</name>
        <dbReference type="ChEBI" id="CHEBI:58702"/>
    </ligand>
</feature>
<feature type="binding site" evidence="1">
    <location>
        <position position="92"/>
    </location>
    <ligand>
        <name>UDP-N-acetyl-alpha-D-glucosamine</name>
        <dbReference type="ChEBI" id="CHEBI:57705"/>
    </ligand>
</feature>
<feature type="binding site" evidence="1">
    <location>
        <begin position="121"/>
        <end position="125"/>
    </location>
    <ligand>
        <name>UDP-N-acetyl-alpha-D-glucosamine</name>
        <dbReference type="ChEBI" id="CHEBI:57705"/>
    </ligand>
</feature>
<feature type="binding site" evidence="1">
    <location>
        <position position="304"/>
    </location>
    <ligand>
        <name>UDP-N-acetyl-alpha-D-glucosamine</name>
        <dbReference type="ChEBI" id="CHEBI:57705"/>
    </ligand>
</feature>
<feature type="binding site" evidence="1">
    <location>
        <position position="326"/>
    </location>
    <ligand>
        <name>UDP-N-acetyl-alpha-D-glucosamine</name>
        <dbReference type="ChEBI" id="CHEBI:57705"/>
    </ligand>
</feature>
<feature type="modified residue" description="2-(S-cysteinyl)pyruvic acid O-phosphothioketal" evidence="1">
    <location>
        <position position="116"/>
    </location>
</feature>
<proteinExistence type="inferred from homology"/>
<keyword id="KW-0131">Cell cycle</keyword>
<keyword id="KW-0132">Cell division</keyword>
<keyword id="KW-0133">Cell shape</keyword>
<keyword id="KW-0961">Cell wall biogenesis/degradation</keyword>
<keyword id="KW-0963">Cytoplasm</keyword>
<keyword id="KW-0573">Peptidoglycan synthesis</keyword>
<keyword id="KW-0670">Pyruvate</keyword>
<keyword id="KW-1185">Reference proteome</keyword>
<keyword id="KW-0808">Transferase</keyword>
<evidence type="ECO:0000255" key="1">
    <source>
        <dbReference type="HAMAP-Rule" id="MF_00111"/>
    </source>
</evidence>
<reference key="1">
    <citation type="journal article" date="2006" name="J. Bacteriol.">
        <title>Comparison of the genome sequence of the poultry pathogen Bordetella avium with those of B. bronchiseptica, B. pertussis, and B. parapertussis reveals extensive diversity in surface structures associated with host interaction.</title>
        <authorList>
            <person name="Sebaihia M."/>
            <person name="Preston A."/>
            <person name="Maskell D.J."/>
            <person name="Kuzmiak H."/>
            <person name="Connell T.D."/>
            <person name="King N.D."/>
            <person name="Orndorff P.E."/>
            <person name="Miyamoto D.M."/>
            <person name="Thomson N.R."/>
            <person name="Harris D."/>
            <person name="Goble A."/>
            <person name="Lord A."/>
            <person name="Murphy L."/>
            <person name="Quail M.A."/>
            <person name="Rutter S."/>
            <person name="Squares R."/>
            <person name="Squares S."/>
            <person name="Woodward J."/>
            <person name="Parkhill J."/>
            <person name="Temple L.M."/>
        </authorList>
    </citation>
    <scope>NUCLEOTIDE SEQUENCE [LARGE SCALE GENOMIC DNA]</scope>
    <source>
        <strain>197N</strain>
    </source>
</reference>
<protein>
    <recommendedName>
        <fullName evidence="1">UDP-N-acetylglucosamine 1-carboxyvinyltransferase</fullName>
        <ecNumber evidence="1">2.5.1.7</ecNumber>
    </recommendedName>
    <alternativeName>
        <fullName evidence="1">Enoylpyruvate transferase</fullName>
    </alternativeName>
    <alternativeName>
        <fullName evidence="1">UDP-N-acetylglucosamine enolpyruvyl transferase</fullName>
        <shortName evidence="1">EPT</shortName>
    </alternativeName>
</protein>
<comment type="function">
    <text evidence="1">Cell wall formation. Adds enolpyruvyl to UDP-N-acetylglucosamine.</text>
</comment>
<comment type="catalytic activity">
    <reaction evidence="1">
        <text>phosphoenolpyruvate + UDP-N-acetyl-alpha-D-glucosamine = UDP-N-acetyl-3-O-(1-carboxyvinyl)-alpha-D-glucosamine + phosphate</text>
        <dbReference type="Rhea" id="RHEA:18681"/>
        <dbReference type="ChEBI" id="CHEBI:43474"/>
        <dbReference type="ChEBI" id="CHEBI:57705"/>
        <dbReference type="ChEBI" id="CHEBI:58702"/>
        <dbReference type="ChEBI" id="CHEBI:68483"/>
        <dbReference type="EC" id="2.5.1.7"/>
    </reaction>
</comment>
<comment type="pathway">
    <text evidence="1">Cell wall biogenesis; peptidoglycan biosynthesis.</text>
</comment>
<comment type="subcellular location">
    <subcellularLocation>
        <location evidence="1">Cytoplasm</location>
    </subcellularLocation>
</comment>
<comment type="similarity">
    <text evidence="1">Belongs to the EPSP synthase family. MurA subfamily.</text>
</comment>
<name>MURA_BORA1</name>